<organism>
    <name type="scientific">Homo sapiens</name>
    <name type="common">Human</name>
    <dbReference type="NCBI Taxonomy" id="9606"/>
    <lineage>
        <taxon>Eukaryota</taxon>
        <taxon>Metazoa</taxon>
        <taxon>Chordata</taxon>
        <taxon>Craniata</taxon>
        <taxon>Vertebrata</taxon>
        <taxon>Euteleostomi</taxon>
        <taxon>Mammalia</taxon>
        <taxon>Eutheria</taxon>
        <taxon>Euarchontoglires</taxon>
        <taxon>Primates</taxon>
        <taxon>Haplorrhini</taxon>
        <taxon>Catarrhini</taxon>
        <taxon>Hominidae</taxon>
        <taxon>Homo</taxon>
    </lineage>
</organism>
<protein>
    <recommendedName>
        <fullName evidence="8">Modulator of macroautophagy TMEM150B</fullName>
    </recommendedName>
    <alternativeName>
        <fullName evidence="7">Protein DRAM-3</fullName>
    </alternativeName>
    <alternativeName>
        <fullName evidence="9">Transmembrane protein 150B</fullName>
    </alternativeName>
    <alternativeName>
        <fullName evidence="9">Transmembrane protein 224</fullName>
    </alternativeName>
</protein>
<sequence length="233" mass="25701">MWGYLSLMPVFLAVWAISGVWIVFAIAVTNRTVDLSKGFPYISICGSFPPQSCIFSQVLNMGAALAAWICIVRYHQLRDWGVRRWPNQLILWTGLLCALGTSVVGNFQEKNQRPTHLAGAFLAFILGNVYFWLQLLLWRLKRLPQPGAAWIGPLRLGLCSVCTILIVAMIVLHACSLRSVSAACEWVVAMLLFALFGLLAVDFSALESCTLCVQPWPSLSPPPASPISLPVQL</sequence>
<comment type="function">
    <text evidence="5">Modulator of macroautophagy that causes accumulation of autophagosomes under basal conditions and enhances autophagic flux (PubMed:25929859). Represses cell death and promotes long-term clonogenic survival of cells grown in the absence of glucose in a macroautophagy-independent manner (PubMed:25929859). May have some role in extracellular matrix engulfment or growth factor receptor recycling, both of which can modulate cell survival (PubMed:25929859).</text>
</comment>
<comment type="subcellular location">
    <subcellularLocation>
        <location evidence="4 5">Cell membrane</location>
        <topology evidence="4">Multi-pass membrane protein</topology>
    </subcellularLocation>
    <subcellularLocation>
        <location evidence="5">Endosome membrane</location>
        <topology evidence="2">Multi-pass membrane protein</topology>
    </subcellularLocation>
    <subcellularLocation>
        <location evidence="5">Cytoplasmic vesicle</location>
        <location evidence="5">Autophagosome membrane</location>
        <topology evidence="2">Multi-pass membrane protein</topology>
    </subcellularLocation>
    <text evidence="4 5">Localizes mainly at the plasma membrane where it concentrates at actin-rich focal adhesions (PubMed:25608530, PubMed:25929859).</text>
</comment>
<comment type="tissue specificity">
    <text evidence="5">Highly expressed in the colon and lung with comparatively high levels also detectable in the lymph nodes, placenta, duodenum, peripheral blood mononuclear cells and spleen (PubMed:25929859).</text>
</comment>
<comment type="induction">
    <text evidence="5">Is not markedly up- or down-regulated by DNA damage, nutrient deprivation or by exposure to TNF-alpha and IFN-gamma (PubMed:25929859).</text>
</comment>
<comment type="similarity">
    <text evidence="8">Belongs to the DRAM/TMEM150 family.</text>
</comment>
<name>T150B_HUMAN</name>
<dbReference type="EMBL" id="AC020922">
    <property type="status" value="NOT_ANNOTATED_CDS"/>
    <property type="molecule type" value="Genomic_DNA"/>
</dbReference>
<dbReference type="EMBL" id="CH471135">
    <property type="protein sequence ID" value="EAW72362.1"/>
    <property type="molecule type" value="Genomic_DNA"/>
</dbReference>
<dbReference type="EMBL" id="BC171904">
    <property type="protein sequence ID" value="AAI71904.1"/>
    <property type="molecule type" value="mRNA"/>
</dbReference>
<dbReference type="CCDS" id="CCDS42629.1"/>
<dbReference type="RefSeq" id="NP_001078957.1">
    <property type="nucleotide sequence ID" value="NM_001085488.3"/>
</dbReference>
<dbReference type="RefSeq" id="NP_001268940.1">
    <property type="nucleotide sequence ID" value="NM_001282011.2"/>
</dbReference>
<dbReference type="RefSeq" id="XP_005258869.1">
    <property type="nucleotide sequence ID" value="XM_005258812.5"/>
</dbReference>
<dbReference type="RefSeq" id="XP_011525154.1">
    <property type="nucleotide sequence ID" value="XM_011526852.2"/>
</dbReference>
<dbReference type="RefSeq" id="XP_011525155.1">
    <property type="nucleotide sequence ID" value="XM_011526853.2"/>
</dbReference>
<dbReference type="RefSeq" id="XP_011525156.1">
    <property type="nucleotide sequence ID" value="XM_011526854.4"/>
</dbReference>
<dbReference type="RefSeq" id="XP_011525157.1">
    <property type="nucleotide sequence ID" value="XM_011526855.2"/>
</dbReference>
<dbReference type="RefSeq" id="XP_011525158.1">
    <property type="nucleotide sequence ID" value="XM_011526856.4"/>
</dbReference>
<dbReference type="RefSeq" id="XP_016882156.1">
    <property type="nucleotide sequence ID" value="XM_017026667.3"/>
</dbReference>
<dbReference type="RefSeq" id="XP_047294624.1">
    <property type="nucleotide sequence ID" value="XM_047438668.1"/>
</dbReference>
<dbReference type="RefSeq" id="XP_047294625.1">
    <property type="nucleotide sequence ID" value="XM_047438669.1"/>
</dbReference>
<dbReference type="RefSeq" id="XP_047294626.1">
    <property type="nucleotide sequence ID" value="XM_047438670.1"/>
</dbReference>
<dbReference type="RefSeq" id="XP_047294627.1">
    <property type="nucleotide sequence ID" value="XM_047438671.1"/>
</dbReference>
<dbReference type="RefSeq" id="XP_047294628.1">
    <property type="nucleotide sequence ID" value="XM_047438672.1"/>
</dbReference>
<dbReference type="RefSeq" id="XP_047294629.1">
    <property type="nucleotide sequence ID" value="XM_047438673.1"/>
</dbReference>
<dbReference type="RefSeq" id="XP_047294630.1">
    <property type="nucleotide sequence ID" value="XM_047438674.1"/>
</dbReference>
<dbReference type="BioGRID" id="129869">
    <property type="interactions" value="1"/>
</dbReference>
<dbReference type="FunCoup" id="A6NC51">
    <property type="interactions" value="347"/>
</dbReference>
<dbReference type="STRING" id="9606.ENSP00000320757"/>
<dbReference type="TCDB" id="8.A.113.1.3">
    <property type="family name" value="the tentonin or tmem150 (tmem150) family"/>
</dbReference>
<dbReference type="GlyCosmos" id="A6NC51">
    <property type="glycosylation" value="1 site, No reported glycans"/>
</dbReference>
<dbReference type="GlyGen" id="A6NC51">
    <property type="glycosylation" value="1 site"/>
</dbReference>
<dbReference type="BioMuta" id="TMEM150B"/>
<dbReference type="PaxDb" id="9606-ENSP00000320757"/>
<dbReference type="PeptideAtlas" id="A6NC51"/>
<dbReference type="Antibodypedia" id="66997">
    <property type="antibodies" value="53 antibodies from 10 providers"/>
</dbReference>
<dbReference type="DNASU" id="284417"/>
<dbReference type="Ensembl" id="ENST00000326652.9">
    <property type="protein sequence ID" value="ENSP00000320757.4"/>
    <property type="gene ID" value="ENSG00000180061.10"/>
</dbReference>
<dbReference type="GeneID" id="284417"/>
<dbReference type="KEGG" id="hsa:284417"/>
<dbReference type="MANE-Select" id="ENST00000326652.9">
    <property type="protein sequence ID" value="ENSP00000320757.4"/>
    <property type="RefSeq nucleotide sequence ID" value="NM_001282011.2"/>
    <property type="RefSeq protein sequence ID" value="NP_001268940.1"/>
</dbReference>
<dbReference type="UCSC" id="uc010yfu.3">
    <property type="organism name" value="human"/>
</dbReference>
<dbReference type="AGR" id="HGNC:34415"/>
<dbReference type="CTD" id="284417"/>
<dbReference type="DisGeNET" id="284417"/>
<dbReference type="GeneCards" id="TMEM150B"/>
<dbReference type="HGNC" id="HGNC:34415">
    <property type="gene designation" value="TMEM150B"/>
</dbReference>
<dbReference type="HPA" id="ENSG00000180061">
    <property type="expression patterns" value="Tissue enriched (intestine)"/>
</dbReference>
<dbReference type="neXtProt" id="NX_A6NC51"/>
<dbReference type="OpenTargets" id="ENSG00000180061"/>
<dbReference type="PharmGKB" id="PA165394503"/>
<dbReference type="VEuPathDB" id="HostDB:ENSG00000180061"/>
<dbReference type="eggNOG" id="KOG4320">
    <property type="taxonomic scope" value="Eukaryota"/>
</dbReference>
<dbReference type="GeneTree" id="ENSGT01030000234578"/>
<dbReference type="InParanoid" id="A6NC51"/>
<dbReference type="OMA" id="IRYHQLR"/>
<dbReference type="OrthoDB" id="191706at2759"/>
<dbReference type="PAN-GO" id="A6NC51">
    <property type="GO annotations" value="1 GO annotation based on evolutionary models"/>
</dbReference>
<dbReference type="PhylomeDB" id="A6NC51"/>
<dbReference type="TreeFam" id="TF314508"/>
<dbReference type="PathwayCommons" id="A6NC51"/>
<dbReference type="BioGRID-ORCS" id="284417">
    <property type="hits" value="13 hits in 1147 CRISPR screens"/>
</dbReference>
<dbReference type="GenomeRNAi" id="284417"/>
<dbReference type="Pharos" id="A6NC51">
    <property type="development level" value="Tbio"/>
</dbReference>
<dbReference type="PRO" id="PR:A6NC51"/>
<dbReference type="Proteomes" id="UP000005640">
    <property type="component" value="Chromosome 19"/>
</dbReference>
<dbReference type="RNAct" id="A6NC51">
    <property type="molecule type" value="protein"/>
</dbReference>
<dbReference type="Bgee" id="ENSG00000180061">
    <property type="expression patterns" value="Expressed in monocyte and 93 other cell types or tissues"/>
</dbReference>
<dbReference type="ExpressionAtlas" id="A6NC51">
    <property type="expression patterns" value="baseline and differential"/>
</dbReference>
<dbReference type="GO" id="GO:0000421">
    <property type="term" value="C:autophagosome membrane"/>
    <property type="evidence" value="ECO:0007669"/>
    <property type="project" value="UniProtKB-SubCell"/>
</dbReference>
<dbReference type="GO" id="GO:0010008">
    <property type="term" value="C:endosome membrane"/>
    <property type="evidence" value="ECO:0007669"/>
    <property type="project" value="UniProtKB-SubCell"/>
</dbReference>
<dbReference type="GO" id="GO:0005886">
    <property type="term" value="C:plasma membrane"/>
    <property type="evidence" value="ECO:0000314"/>
    <property type="project" value="UniProtKB"/>
</dbReference>
<dbReference type="GO" id="GO:0006914">
    <property type="term" value="P:autophagy"/>
    <property type="evidence" value="ECO:0007669"/>
    <property type="project" value="UniProtKB-KW"/>
</dbReference>
<dbReference type="InterPro" id="IPR050911">
    <property type="entry name" value="DRAM/TMEM150_Autophagy_Mod"/>
</dbReference>
<dbReference type="InterPro" id="IPR019402">
    <property type="entry name" value="Frag1/DRAM/Sfk1"/>
</dbReference>
<dbReference type="PANTHER" id="PTHR21324">
    <property type="entry name" value="FASTING-INDUCIBLE INTEGRAL MEMBRANE PROTEIN TM6P1-RELATED"/>
    <property type="match status" value="1"/>
</dbReference>
<dbReference type="PANTHER" id="PTHR21324:SF3">
    <property type="entry name" value="MODULATOR OF MACROAUTOPHAGY TMEM150B"/>
    <property type="match status" value="1"/>
</dbReference>
<dbReference type="Pfam" id="PF10277">
    <property type="entry name" value="Frag1"/>
    <property type="match status" value="1"/>
</dbReference>
<reference key="1">
    <citation type="journal article" date="2004" name="Nature">
        <title>The DNA sequence and biology of human chromosome 19.</title>
        <authorList>
            <person name="Grimwood J."/>
            <person name="Gordon L.A."/>
            <person name="Olsen A.S."/>
            <person name="Terry A."/>
            <person name="Schmutz J."/>
            <person name="Lamerdin J.E."/>
            <person name="Hellsten U."/>
            <person name="Goodstein D."/>
            <person name="Couronne O."/>
            <person name="Tran-Gyamfi M."/>
            <person name="Aerts A."/>
            <person name="Altherr M."/>
            <person name="Ashworth L."/>
            <person name="Bajorek E."/>
            <person name="Black S."/>
            <person name="Branscomb E."/>
            <person name="Caenepeel S."/>
            <person name="Carrano A.V."/>
            <person name="Caoile C."/>
            <person name="Chan Y.M."/>
            <person name="Christensen M."/>
            <person name="Cleland C.A."/>
            <person name="Copeland A."/>
            <person name="Dalin E."/>
            <person name="Dehal P."/>
            <person name="Denys M."/>
            <person name="Detter J.C."/>
            <person name="Escobar J."/>
            <person name="Flowers D."/>
            <person name="Fotopulos D."/>
            <person name="Garcia C."/>
            <person name="Georgescu A.M."/>
            <person name="Glavina T."/>
            <person name="Gomez M."/>
            <person name="Gonzales E."/>
            <person name="Groza M."/>
            <person name="Hammon N."/>
            <person name="Hawkins T."/>
            <person name="Haydu L."/>
            <person name="Ho I."/>
            <person name="Huang W."/>
            <person name="Israni S."/>
            <person name="Jett J."/>
            <person name="Kadner K."/>
            <person name="Kimball H."/>
            <person name="Kobayashi A."/>
            <person name="Larionov V."/>
            <person name="Leem S.-H."/>
            <person name="Lopez F."/>
            <person name="Lou Y."/>
            <person name="Lowry S."/>
            <person name="Malfatti S."/>
            <person name="Martinez D."/>
            <person name="McCready P.M."/>
            <person name="Medina C."/>
            <person name="Morgan J."/>
            <person name="Nelson K."/>
            <person name="Nolan M."/>
            <person name="Ovcharenko I."/>
            <person name="Pitluck S."/>
            <person name="Pollard M."/>
            <person name="Popkie A.P."/>
            <person name="Predki P."/>
            <person name="Quan G."/>
            <person name="Ramirez L."/>
            <person name="Rash S."/>
            <person name="Retterer J."/>
            <person name="Rodriguez A."/>
            <person name="Rogers S."/>
            <person name="Salamov A."/>
            <person name="Salazar A."/>
            <person name="She X."/>
            <person name="Smith D."/>
            <person name="Slezak T."/>
            <person name="Solovyev V."/>
            <person name="Thayer N."/>
            <person name="Tice H."/>
            <person name="Tsai M."/>
            <person name="Ustaszewska A."/>
            <person name="Vo N."/>
            <person name="Wagner M."/>
            <person name="Wheeler J."/>
            <person name="Wu K."/>
            <person name="Xie G."/>
            <person name="Yang J."/>
            <person name="Dubchak I."/>
            <person name="Furey T.S."/>
            <person name="DeJong P."/>
            <person name="Dickson M."/>
            <person name="Gordon D."/>
            <person name="Eichler E.E."/>
            <person name="Pennacchio L.A."/>
            <person name="Richardson P."/>
            <person name="Stubbs L."/>
            <person name="Rokhsar D.S."/>
            <person name="Myers R.M."/>
            <person name="Rubin E.M."/>
            <person name="Lucas S.M."/>
        </authorList>
    </citation>
    <scope>NUCLEOTIDE SEQUENCE [LARGE SCALE GENOMIC DNA]</scope>
</reference>
<reference key="2">
    <citation type="submission" date="2005-07" db="EMBL/GenBank/DDBJ databases">
        <authorList>
            <person name="Mural R.J."/>
            <person name="Istrail S."/>
            <person name="Sutton G.G."/>
            <person name="Florea L."/>
            <person name="Halpern A.L."/>
            <person name="Mobarry C.M."/>
            <person name="Lippert R."/>
            <person name="Walenz B."/>
            <person name="Shatkay H."/>
            <person name="Dew I."/>
            <person name="Miller J.R."/>
            <person name="Flanigan M.J."/>
            <person name="Edwards N.J."/>
            <person name="Bolanos R."/>
            <person name="Fasulo D."/>
            <person name="Halldorsson B.V."/>
            <person name="Hannenhalli S."/>
            <person name="Turner R."/>
            <person name="Yooseph S."/>
            <person name="Lu F."/>
            <person name="Nusskern D.R."/>
            <person name="Shue B.C."/>
            <person name="Zheng X.H."/>
            <person name="Zhong F."/>
            <person name="Delcher A.L."/>
            <person name="Huson D.H."/>
            <person name="Kravitz S.A."/>
            <person name="Mouchard L."/>
            <person name="Reinert K."/>
            <person name="Remington K.A."/>
            <person name="Clark A.G."/>
            <person name="Waterman M.S."/>
            <person name="Eichler E.E."/>
            <person name="Adams M.D."/>
            <person name="Hunkapiller M.W."/>
            <person name="Myers E.W."/>
            <person name="Venter J.C."/>
        </authorList>
    </citation>
    <scope>NUCLEOTIDE SEQUENCE [LARGE SCALE GENOMIC DNA]</scope>
    <scope>VARIANT PHE-199</scope>
</reference>
<reference key="3">
    <citation type="journal article" date="2004" name="Genome Res.">
        <title>The status, quality, and expansion of the NIH full-length cDNA project: the Mammalian Gene Collection (MGC).</title>
        <authorList>
            <consortium name="The MGC Project Team"/>
        </authorList>
    </citation>
    <scope>NUCLEOTIDE SEQUENCE [LARGE SCALE MRNA]</scope>
    <scope>VARIANT PHE-199</scope>
    <source>
        <tissue>Brain</tissue>
    </source>
</reference>
<reference key="4">
    <citation type="journal article" date="2015" name="EMBO Rep.">
        <title>Plasticity of PI4KIIIalpha interactions at the plasma membrane.</title>
        <authorList>
            <person name="Chung J."/>
            <person name="Nakatsu F."/>
            <person name="Baskin J.M."/>
            <person name="De Camilli P."/>
        </authorList>
    </citation>
    <scope>SUBCELLULAR LOCATION</scope>
</reference>
<reference key="5">
    <citation type="journal article" date="2015" name="Cell Death Differ.">
        <title>DRAM-3 modulates autophagy and promotes cell survival in the absence of glucose.</title>
        <authorList>
            <person name="Mrschtik M."/>
            <person name="O'Prey J."/>
            <person name="Lao L.Y."/>
            <person name="Long J.S."/>
            <person name="Beaumatin F."/>
            <person name="Strachan D."/>
            <person name="O'Prey M."/>
            <person name="Skommer J."/>
            <person name="Ryan K.M."/>
        </authorList>
    </citation>
    <scope>TISSUE SPECIFICITY</scope>
    <scope>INDUCTION</scope>
    <scope>SUBCELLULAR LOCATION</scope>
    <scope>FUNCTION</scope>
</reference>
<accession>A6NC51</accession>
<accession>B7ZW71</accession>
<keyword id="KW-0072">Autophagy</keyword>
<keyword id="KW-1003">Cell membrane</keyword>
<keyword id="KW-0968">Cytoplasmic vesicle</keyword>
<keyword id="KW-0967">Endosome</keyword>
<keyword id="KW-0325">Glycoprotein</keyword>
<keyword id="KW-0472">Membrane</keyword>
<keyword id="KW-1185">Reference proteome</keyword>
<keyword id="KW-0812">Transmembrane</keyword>
<keyword id="KW-1133">Transmembrane helix</keyword>
<proteinExistence type="evidence at transcript level"/>
<gene>
    <name evidence="9" type="primary">TMEM150B</name>
    <name evidence="9" type="synonym">TMEM224</name>
</gene>
<evidence type="ECO:0000250" key="1">
    <source>
        <dbReference type="UniProtKB" id="Q86TG1"/>
    </source>
</evidence>
<evidence type="ECO:0000255" key="2"/>
<evidence type="ECO:0000269" key="3">
    <source>
    </source>
</evidence>
<evidence type="ECO:0000269" key="4">
    <source>
    </source>
</evidence>
<evidence type="ECO:0000269" key="5">
    <source>
    </source>
</evidence>
<evidence type="ECO:0000269" key="6">
    <source ref="2"/>
</evidence>
<evidence type="ECO:0000303" key="7">
    <source>
    </source>
</evidence>
<evidence type="ECO:0000305" key="8"/>
<evidence type="ECO:0000312" key="9">
    <source>
        <dbReference type="HGNC" id="HGNC:34415"/>
    </source>
</evidence>
<feature type="chain" id="PRO_0000349284" description="Modulator of macroautophagy TMEM150B">
    <location>
        <begin position="1"/>
        <end position="233"/>
    </location>
</feature>
<feature type="topological domain" description="Cytoplasmic" evidence="8">
    <location>
        <begin position="1"/>
        <end position="7"/>
    </location>
</feature>
<feature type="transmembrane region" description="Helical" evidence="2">
    <location>
        <begin position="8"/>
        <end position="28"/>
    </location>
</feature>
<feature type="topological domain" description="Extracellular" evidence="8">
    <location>
        <begin position="29"/>
        <end position="51"/>
    </location>
</feature>
<feature type="transmembrane region" description="Helical" evidence="2">
    <location>
        <begin position="52"/>
        <end position="72"/>
    </location>
</feature>
<feature type="topological domain" description="Cytoplasmic" evidence="8">
    <location>
        <begin position="73"/>
        <end position="84"/>
    </location>
</feature>
<feature type="transmembrane region" description="Helical" evidence="2">
    <location>
        <begin position="85"/>
        <end position="105"/>
    </location>
</feature>
<feature type="topological domain" description="Extracellular" evidence="8">
    <location>
        <begin position="106"/>
        <end position="116"/>
    </location>
</feature>
<feature type="transmembrane region" description="Helical" evidence="2">
    <location>
        <begin position="117"/>
        <end position="137"/>
    </location>
</feature>
<feature type="topological domain" description="Cytoplasmic" evidence="8">
    <location>
        <begin position="138"/>
        <end position="155"/>
    </location>
</feature>
<feature type="transmembrane region" description="Helical" evidence="2">
    <location>
        <begin position="156"/>
        <end position="176"/>
    </location>
</feature>
<feature type="topological domain" description="Extracellular" evidence="8">
    <location>
        <begin position="177"/>
        <end position="185"/>
    </location>
</feature>
<feature type="transmembrane region" description="Helical" evidence="2">
    <location>
        <begin position="186"/>
        <end position="206"/>
    </location>
</feature>
<feature type="topological domain" description="Cytoplasmic" evidence="1">
    <location>
        <begin position="207"/>
        <end position="233"/>
    </location>
</feature>
<feature type="glycosylation site" description="N-linked (GlcNAc...) asparagine" evidence="2">
    <location>
        <position position="30"/>
    </location>
</feature>
<feature type="sequence variant" id="VAR_046343" description="In dbSNP:rs7246479." evidence="3 6">
    <original>L</original>
    <variation>F</variation>
    <location>
        <position position="199"/>
    </location>
</feature>